<accession>Q3JZB5</accession>
<evidence type="ECO:0000255" key="1">
    <source>
        <dbReference type="HAMAP-Rule" id="MF_00054"/>
    </source>
</evidence>
<feature type="chain" id="PRO_0000225243" description="Elongation factor G">
    <location>
        <begin position="1"/>
        <end position="692"/>
    </location>
</feature>
<feature type="domain" description="tr-type G">
    <location>
        <begin position="8"/>
        <end position="282"/>
    </location>
</feature>
<feature type="binding site" evidence="1">
    <location>
        <begin position="17"/>
        <end position="24"/>
    </location>
    <ligand>
        <name>GTP</name>
        <dbReference type="ChEBI" id="CHEBI:37565"/>
    </ligand>
</feature>
<feature type="binding site" evidence="1">
    <location>
        <begin position="81"/>
        <end position="85"/>
    </location>
    <ligand>
        <name>GTP</name>
        <dbReference type="ChEBI" id="CHEBI:37565"/>
    </ligand>
</feature>
<feature type="binding site" evidence="1">
    <location>
        <begin position="135"/>
        <end position="138"/>
    </location>
    <ligand>
        <name>GTP</name>
        <dbReference type="ChEBI" id="CHEBI:37565"/>
    </ligand>
</feature>
<comment type="function">
    <text evidence="1">Catalyzes the GTP-dependent ribosomal translocation step during translation elongation. During this step, the ribosome changes from the pre-translocational (PRE) to the post-translocational (POST) state as the newly formed A-site-bound peptidyl-tRNA and P-site-bound deacylated tRNA move to the P and E sites, respectively. Catalyzes the coordinated movement of the two tRNA molecules, the mRNA and conformational changes in the ribosome.</text>
</comment>
<comment type="subcellular location">
    <subcellularLocation>
        <location evidence="1">Cytoplasm</location>
    </subcellularLocation>
</comment>
<comment type="similarity">
    <text evidence="1">Belongs to the TRAFAC class translation factor GTPase superfamily. Classic translation factor GTPase family. EF-G/EF-2 subfamily.</text>
</comment>
<keyword id="KW-0963">Cytoplasm</keyword>
<keyword id="KW-0251">Elongation factor</keyword>
<keyword id="KW-0342">GTP-binding</keyword>
<keyword id="KW-0547">Nucleotide-binding</keyword>
<keyword id="KW-0648">Protein biosynthesis</keyword>
<name>EFG_STRA1</name>
<organism>
    <name type="scientific">Streptococcus agalactiae serotype Ia (strain ATCC 27591 / A909 / CDC SS700)</name>
    <dbReference type="NCBI Taxonomy" id="205921"/>
    <lineage>
        <taxon>Bacteria</taxon>
        <taxon>Bacillati</taxon>
        <taxon>Bacillota</taxon>
        <taxon>Bacilli</taxon>
        <taxon>Lactobacillales</taxon>
        <taxon>Streptococcaceae</taxon>
        <taxon>Streptococcus</taxon>
    </lineage>
</organism>
<proteinExistence type="inferred from homology"/>
<gene>
    <name evidence="1" type="primary">fusA</name>
    <name type="ordered locus">SAK_1791</name>
</gene>
<sequence>MAREFSLEKTRNIGIMAHVDAGKTTTTERILYYTGKIHKIGETHEGASQMDWMEQEQERGITITSAATTAQWDGHRVNIIDTPGHVDFTIEVQRSLRVLDGAVTVLDAQSGVEPQTETVWRQATEYGVPRIVFANKMDKIGADFLYSVQSLHDRLQANAHPIQLPIGSEDDFRGIIDLIKMKAEIYTNDLGTDILEEDIPAEYVDQANEYREKLVEAVADTDEDLMMKYLEGEEITNEELMAAIRKATINVEFYPVLCGSAFKNKGVQLMLDAVIDYLPSPLDIPAIKGINPDTDEEETRPASDEEPFAALAFKIMTDPFVGRLTFFRVYSGVLNSGSYVLNTSKGKRERIGRILQMHANSRQEIETVYAGDIAAAVGLKDTTTGDSLTDEKSKVILESIEVPEPVIQLMVEPKSKADQDKMGIALQKLAEEDPTFRVETNVETGETVISGMGELHLDVLVDRMKREFKVEANVGAPQVSYRETFRASTQARGFFKRQSGGKGQFGDVWIEFTPNEEGKGFEFENAIVGGVVPREFIPAVEKGLVESMANGVLAGYPMVDVKAKLYDGSYHDVDSSETAFKIAASLALKEAAKSAQPAILEPMMLVTITAPEDNLGDVMGHVTARRGRVDGMEARGNTQVVRAFVPLAEMFGYATVLRSATQGRGTFMMVFDHYEDVPKSVQEEIIKKNSGE</sequence>
<protein>
    <recommendedName>
        <fullName evidence="1">Elongation factor G</fullName>
        <shortName evidence="1">EF-G</shortName>
    </recommendedName>
</protein>
<dbReference type="EMBL" id="CP000114">
    <property type="protein sequence ID" value="ABA46345.1"/>
    <property type="molecule type" value="Genomic_DNA"/>
</dbReference>
<dbReference type="RefSeq" id="WP_000090323.1">
    <property type="nucleotide sequence ID" value="NC_007432.1"/>
</dbReference>
<dbReference type="SMR" id="Q3JZB5"/>
<dbReference type="GeneID" id="66886607"/>
<dbReference type="KEGG" id="sak:SAK_1791"/>
<dbReference type="HOGENOM" id="CLU_002794_4_1_9"/>
<dbReference type="GO" id="GO:0005737">
    <property type="term" value="C:cytoplasm"/>
    <property type="evidence" value="ECO:0007669"/>
    <property type="project" value="UniProtKB-SubCell"/>
</dbReference>
<dbReference type="GO" id="GO:0005525">
    <property type="term" value="F:GTP binding"/>
    <property type="evidence" value="ECO:0007669"/>
    <property type="project" value="UniProtKB-UniRule"/>
</dbReference>
<dbReference type="GO" id="GO:0003924">
    <property type="term" value="F:GTPase activity"/>
    <property type="evidence" value="ECO:0007669"/>
    <property type="project" value="InterPro"/>
</dbReference>
<dbReference type="GO" id="GO:0003746">
    <property type="term" value="F:translation elongation factor activity"/>
    <property type="evidence" value="ECO:0007669"/>
    <property type="project" value="UniProtKB-UniRule"/>
</dbReference>
<dbReference type="GO" id="GO:0032790">
    <property type="term" value="P:ribosome disassembly"/>
    <property type="evidence" value="ECO:0007669"/>
    <property type="project" value="TreeGrafter"/>
</dbReference>
<dbReference type="CDD" id="cd01886">
    <property type="entry name" value="EF-G"/>
    <property type="match status" value="1"/>
</dbReference>
<dbReference type="CDD" id="cd16262">
    <property type="entry name" value="EFG_III"/>
    <property type="match status" value="1"/>
</dbReference>
<dbReference type="CDD" id="cd01434">
    <property type="entry name" value="EFG_mtEFG1_IV"/>
    <property type="match status" value="1"/>
</dbReference>
<dbReference type="CDD" id="cd03713">
    <property type="entry name" value="EFG_mtEFG_C"/>
    <property type="match status" value="1"/>
</dbReference>
<dbReference type="CDD" id="cd04088">
    <property type="entry name" value="EFG_mtEFG_II"/>
    <property type="match status" value="1"/>
</dbReference>
<dbReference type="FunFam" id="2.40.30.10:FF:000006">
    <property type="entry name" value="Elongation factor G"/>
    <property type="match status" value="1"/>
</dbReference>
<dbReference type="FunFam" id="3.30.230.10:FF:000003">
    <property type="entry name" value="Elongation factor G"/>
    <property type="match status" value="1"/>
</dbReference>
<dbReference type="FunFam" id="3.30.70.240:FF:000001">
    <property type="entry name" value="Elongation factor G"/>
    <property type="match status" value="1"/>
</dbReference>
<dbReference type="FunFam" id="3.30.70.870:FF:000001">
    <property type="entry name" value="Elongation factor G"/>
    <property type="match status" value="1"/>
</dbReference>
<dbReference type="FunFam" id="3.40.50.300:FF:000029">
    <property type="entry name" value="Elongation factor G"/>
    <property type="match status" value="1"/>
</dbReference>
<dbReference type="Gene3D" id="3.30.230.10">
    <property type="match status" value="1"/>
</dbReference>
<dbReference type="Gene3D" id="3.30.70.240">
    <property type="match status" value="1"/>
</dbReference>
<dbReference type="Gene3D" id="3.30.70.870">
    <property type="entry name" value="Elongation Factor G (Translational Gtpase), domain 3"/>
    <property type="match status" value="1"/>
</dbReference>
<dbReference type="Gene3D" id="3.40.50.300">
    <property type="entry name" value="P-loop containing nucleotide triphosphate hydrolases"/>
    <property type="match status" value="1"/>
</dbReference>
<dbReference type="Gene3D" id="2.40.30.10">
    <property type="entry name" value="Translation factors"/>
    <property type="match status" value="1"/>
</dbReference>
<dbReference type="HAMAP" id="MF_00054_B">
    <property type="entry name" value="EF_G_EF_2_B"/>
    <property type="match status" value="1"/>
</dbReference>
<dbReference type="InterPro" id="IPR041095">
    <property type="entry name" value="EFG_II"/>
</dbReference>
<dbReference type="InterPro" id="IPR009022">
    <property type="entry name" value="EFG_III"/>
</dbReference>
<dbReference type="InterPro" id="IPR035647">
    <property type="entry name" value="EFG_III/V"/>
</dbReference>
<dbReference type="InterPro" id="IPR047872">
    <property type="entry name" value="EFG_IV"/>
</dbReference>
<dbReference type="InterPro" id="IPR035649">
    <property type="entry name" value="EFG_V"/>
</dbReference>
<dbReference type="InterPro" id="IPR000640">
    <property type="entry name" value="EFG_V-like"/>
</dbReference>
<dbReference type="InterPro" id="IPR004161">
    <property type="entry name" value="EFTu-like_2"/>
</dbReference>
<dbReference type="InterPro" id="IPR031157">
    <property type="entry name" value="G_TR_CS"/>
</dbReference>
<dbReference type="InterPro" id="IPR027417">
    <property type="entry name" value="P-loop_NTPase"/>
</dbReference>
<dbReference type="InterPro" id="IPR020568">
    <property type="entry name" value="Ribosomal_Su5_D2-typ_SF"/>
</dbReference>
<dbReference type="InterPro" id="IPR014721">
    <property type="entry name" value="Ribsml_uS5_D2-typ_fold_subgr"/>
</dbReference>
<dbReference type="InterPro" id="IPR005225">
    <property type="entry name" value="Small_GTP-bd"/>
</dbReference>
<dbReference type="InterPro" id="IPR000795">
    <property type="entry name" value="T_Tr_GTP-bd_dom"/>
</dbReference>
<dbReference type="InterPro" id="IPR009000">
    <property type="entry name" value="Transl_B-barrel_sf"/>
</dbReference>
<dbReference type="InterPro" id="IPR004540">
    <property type="entry name" value="Transl_elong_EFG/EF2"/>
</dbReference>
<dbReference type="InterPro" id="IPR005517">
    <property type="entry name" value="Transl_elong_EFG/EF2_IV"/>
</dbReference>
<dbReference type="NCBIfam" id="TIGR00484">
    <property type="entry name" value="EF-G"/>
    <property type="match status" value="1"/>
</dbReference>
<dbReference type="NCBIfam" id="NF009379">
    <property type="entry name" value="PRK12740.1-3"/>
    <property type="match status" value="1"/>
</dbReference>
<dbReference type="NCBIfam" id="NF009381">
    <property type="entry name" value="PRK12740.1-5"/>
    <property type="match status" value="1"/>
</dbReference>
<dbReference type="NCBIfam" id="TIGR00231">
    <property type="entry name" value="small_GTP"/>
    <property type="match status" value="1"/>
</dbReference>
<dbReference type="PANTHER" id="PTHR43261:SF1">
    <property type="entry name" value="RIBOSOME-RELEASING FACTOR 2, MITOCHONDRIAL"/>
    <property type="match status" value="1"/>
</dbReference>
<dbReference type="PANTHER" id="PTHR43261">
    <property type="entry name" value="TRANSLATION ELONGATION FACTOR G-RELATED"/>
    <property type="match status" value="1"/>
</dbReference>
<dbReference type="Pfam" id="PF00679">
    <property type="entry name" value="EFG_C"/>
    <property type="match status" value="1"/>
</dbReference>
<dbReference type="Pfam" id="PF14492">
    <property type="entry name" value="EFG_III"/>
    <property type="match status" value="1"/>
</dbReference>
<dbReference type="Pfam" id="PF03764">
    <property type="entry name" value="EFG_IV"/>
    <property type="match status" value="1"/>
</dbReference>
<dbReference type="Pfam" id="PF00009">
    <property type="entry name" value="GTP_EFTU"/>
    <property type="match status" value="1"/>
</dbReference>
<dbReference type="Pfam" id="PF03144">
    <property type="entry name" value="GTP_EFTU_D2"/>
    <property type="match status" value="1"/>
</dbReference>
<dbReference type="PRINTS" id="PR00315">
    <property type="entry name" value="ELONGATNFCT"/>
</dbReference>
<dbReference type="SMART" id="SM00838">
    <property type="entry name" value="EFG_C"/>
    <property type="match status" value="1"/>
</dbReference>
<dbReference type="SMART" id="SM00889">
    <property type="entry name" value="EFG_IV"/>
    <property type="match status" value="1"/>
</dbReference>
<dbReference type="SUPFAM" id="SSF54980">
    <property type="entry name" value="EF-G C-terminal domain-like"/>
    <property type="match status" value="2"/>
</dbReference>
<dbReference type="SUPFAM" id="SSF52540">
    <property type="entry name" value="P-loop containing nucleoside triphosphate hydrolases"/>
    <property type="match status" value="1"/>
</dbReference>
<dbReference type="SUPFAM" id="SSF54211">
    <property type="entry name" value="Ribosomal protein S5 domain 2-like"/>
    <property type="match status" value="1"/>
</dbReference>
<dbReference type="SUPFAM" id="SSF50447">
    <property type="entry name" value="Translation proteins"/>
    <property type="match status" value="1"/>
</dbReference>
<dbReference type="PROSITE" id="PS00301">
    <property type="entry name" value="G_TR_1"/>
    <property type="match status" value="1"/>
</dbReference>
<dbReference type="PROSITE" id="PS51722">
    <property type="entry name" value="G_TR_2"/>
    <property type="match status" value="1"/>
</dbReference>
<reference key="1">
    <citation type="journal article" date="2005" name="Proc. Natl. Acad. Sci. U.S.A.">
        <title>Genome analysis of multiple pathogenic isolates of Streptococcus agalactiae: implications for the microbial 'pan-genome'.</title>
        <authorList>
            <person name="Tettelin H."/>
            <person name="Masignani V."/>
            <person name="Cieslewicz M.J."/>
            <person name="Donati C."/>
            <person name="Medini D."/>
            <person name="Ward N.L."/>
            <person name="Angiuoli S.V."/>
            <person name="Crabtree J."/>
            <person name="Jones A.L."/>
            <person name="Durkin A.S."/>
            <person name="DeBoy R.T."/>
            <person name="Davidsen T.M."/>
            <person name="Mora M."/>
            <person name="Scarselli M."/>
            <person name="Margarit y Ros I."/>
            <person name="Peterson J.D."/>
            <person name="Hauser C.R."/>
            <person name="Sundaram J.P."/>
            <person name="Nelson W.C."/>
            <person name="Madupu R."/>
            <person name="Brinkac L.M."/>
            <person name="Dodson R.J."/>
            <person name="Rosovitz M.J."/>
            <person name="Sullivan S.A."/>
            <person name="Daugherty S.C."/>
            <person name="Haft D.H."/>
            <person name="Selengut J."/>
            <person name="Gwinn M.L."/>
            <person name="Zhou L."/>
            <person name="Zafar N."/>
            <person name="Khouri H."/>
            <person name="Radune D."/>
            <person name="Dimitrov G."/>
            <person name="Watkins K."/>
            <person name="O'Connor K.J."/>
            <person name="Smith S."/>
            <person name="Utterback T.R."/>
            <person name="White O."/>
            <person name="Rubens C.E."/>
            <person name="Grandi G."/>
            <person name="Madoff L.C."/>
            <person name="Kasper D.L."/>
            <person name="Telford J.L."/>
            <person name="Wessels M.R."/>
            <person name="Rappuoli R."/>
            <person name="Fraser C.M."/>
        </authorList>
    </citation>
    <scope>NUCLEOTIDE SEQUENCE [LARGE SCALE GENOMIC DNA]</scope>
    <source>
        <strain>ATCC 27591 / A909 / CDC SS700</strain>
    </source>
</reference>